<reference key="1">
    <citation type="journal article" date="2006" name="Nature">
        <title>DNA sequence of human chromosome 17 and analysis of rearrangement in the human lineage.</title>
        <authorList>
            <person name="Zody M.C."/>
            <person name="Garber M."/>
            <person name="Adams D.J."/>
            <person name="Sharpe T."/>
            <person name="Harrow J."/>
            <person name="Lupski J.R."/>
            <person name="Nicholson C."/>
            <person name="Searle S.M."/>
            <person name="Wilming L."/>
            <person name="Young S.K."/>
            <person name="Abouelleil A."/>
            <person name="Allen N.R."/>
            <person name="Bi W."/>
            <person name="Bloom T."/>
            <person name="Borowsky M.L."/>
            <person name="Bugalter B.E."/>
            <person name="Butler J."/>
            <person name="Chang J.L."/>
            <person name="Chen C.-K."/>
            <person name="Cook A."/>
            <person name="Corum B."/>
            <person name="Cuomo C.A."/>
            <person name="de Jong P.J."/>
            <person name="DeCaprio D."/>
            <person name="Dewar K."/>
            <person name="FitzGerald M."/>
            <person name="Gilbert J."/>
            <person name="Gibson R."/>
            <person name="Gnerre S."/>
            <person name="Goldstein S."/>
            <person name="Grafham D.V."/>
            <person name="Grocock R."/>
            <person name="Hafez N."/>
            <person name="Hagopian D.S."/>
            <person name="Hart E."/>
            <person name="Norman C.H."/>
            <person name="Humphray S."/>
            <person name="Jaffe D.B."/>
            <person name="Jones M."/>
            <person name="Kamal M."/>
            <person name="Khodiyar V.K."/>
            <person name="LaButti K."/>
            <person name="Laird G."/>
            <person name="Lehoczky J."/>
            <person name="Liu X."/>
            <person name="Lokyitsang T."/>
            <person name="Loveland J."/>
            <person name="Lui A."/>
            <person name="Macdonald P."/>
            <person name="Major J.E."/>
            <person name="Matthews L."/>
            <person name="Mauceli E."/>
            <person name="McCarroll S.A."/>
            <person name="Mihalev A.H."/>
            <person name="Mudge J."/>
            <person name="Nguyen C."/>
            <person name="Nicol R."/>
            <person name="O'Leary S.B."/>
            <person name="Osoegawa K."/>
            <person name="Schwartz D.C."/>
            <person name="Shaw-Smith C."/>
            <person name="Stankiewicz P."/>
            <person name="Steward C."/>
            <person name="Swarbreck D."/>
            <person name="Venkataraman V."/>
            <person name="Whittaker C.A."/>
            <person name="Yang X."/>
            <person name="Zimmer A.R."/>
            <person name="Bradley A."/>
            <person name="Hubbard T."/>
            <person name="Birren B.W."/>
            <person name="Rogers J."/>
            <person name="Lander E.S."/>
            <person name="Nusbaum C."/>
        </authorList>
    </citation>
    <scope>NUCLEOTIDE SEQUENCE [LARGE SCALE GENOMIC DNA]</scope>
</reference>
<reference key="2">
    <citation type="submission" date="2005-07" db="EMBL/GenBank/DDBJ databases">
        <authorList>
            <person name="Mural R.J."/>
            <person name="Istrail S."/>
            <person name="Sutton G.G."/>
            <person name="Florea L."/>
            <person name="Halpern A.L."/>
            <person name="Mobarry C.M."/>
            <person name="Lippert R."/>
            <person name="Walenz B."/>
            <person name="Shatkay H."/>
            <person name="Dew I."/>
            <person name="Miller J.R."/>
            <person name="Flanigan M.J."/>
            <person name="Edwards N.J."/>
            <person name="Bolanos R."/>
            <person name="Fasulo D."/>
            <person name="Halldorsson B.V."/>
            <person name="Hannenhalli S."/>
            <person name="Turner R."/>
            <person name="Yooseph S."/>
            <person name="Lu F."/>
            <person name="Nusskern D.R."/>
            <person name="Shue B.C."/>
            <person name="Zheng X.H."/>
            <person name="Zhong F."/>
            <person name="Delcher A.L."/>
            <person name="Huson D.H."/>
            <person name="Kravitz S.A."/>
            <person name="Mouchard L."/>
            <person name="Reinert K."/>
            <person name="Remington K.A."/>
            <person name="Clark A.G."/>
            <person name="Waterman M.S."/>
            <person name="Eichler E.E."/>
            <person name="Adams M.D."/>
            <person name="Hunkapiller M.W."/>
            <person name="Myers E.W."/>
            <person name="Venter J.C."/>
        </authorList>
    </citation>
    <scope>NUCLEOTIDE SEQUENCE [LARGE SCALE GENOMIC DNA]</scope>
</reference>
<name>BTBDH_HUMAN</name>
<protein>
    <recommendedName>
        <fullName>BTB/POZ domain-containing protein 17</fullName>
    </recommendedName>
    <alternativeName>
        <fullName>Galectin-3-binding protein-like</fullName>
    </alternativeName>
</protein>
<proteinExistence type="evidence at protein level"/>
<evidence type="ECO:0000255" key="1"/>
<evidence type="ECO:0000255" key="2">
    <source>
        <dbReference type="PROSITE-ProRule" id="PRU00037"/>
    </source>
</evidence>
<evidence type="ECO:0000305" key="3"/>
<keyword id="KW-0325">Glycoprotein</keyword>
<keyword id="KW-1267">Proteomics identification</keyword>
<keyword id="KW-1185">Reference proteome</keyword>
<keyword id="KW-0964">Secreted</keyword>
<keyword id="KW-0732">Signal</keyword>
<organism>
    <name type="scientific">Homo sapiens</name>
    <name type="common">Human</name>
    <dbReference type="NCBI Taxonomy" id="9606"/>
    <lineage>
        <taxon>Eukaryota</taxon>
        <taxon>Metazoa</taxon>
        <taxon>Chordata</taxon>
        <taxon>Craniata</taxon>
        <taxon>Vertebrata</taxon>
        <taxon>Euteleostomi</taxon>
        <taxon>Mammalia</taxon>
        <taxon>Eutheria</taxon>
        <taxon>Euarchontoglires</taxon>
        <taxon>Primates</taxon>
        <taxon>Haplorrhini</taxon>
        <taxon>Catarrhini</taxon>
        <taxon>Hominidae</taxon>
        <taxon>Homo</taxon>
    </lineage>
</organism>
<dbReference type="EMBL" id="AC103809">
    <property type="status" value="NOT_ANNOTATED_CDS"/>
    <property type="molecule type" value="Genomic_DNA"/>
</dbReference>
<dbReference type="EMBL" id="CH471099">
    <property type="protein sequence ID" value="EAW89155.1"/>
    <property type="molecule type" value="Genomic_DNA"/>
</dbReference>
<dbReference type="CCDS" id="CCDS32719.1"/>
<dbReference type="RefSeq" id="NP_001073935.1">
    <property type="nucleotide sequence ID" value="NM_001080466.2"/>
</dbReference>
<dbReference type="SMR" id="A6NE02"/>
<dbReference type="BioGRID" id="132681">
    <property type="interactions" value="7"/>
</dbReference>
<dbReference type="FunCoup" id="A6NE02">
    <property type="interactions" value="675"/>
</dbReference>
<dbReference type="IntAct" id="A6NE02">
    <property type="interactions" value="1"/>
</dbReference>
<dbReference type="STRING" id="9606.ENSP00000364515"/>
<dbReference type="GlyCosmos" id="A6NE02">
    <property type="glycosylation" value="3 sites, No reported glycans"/>
</dbReference>
<dbReference type="GlyGen" id="A6NE02">
    <property type="glycosylation" value="3 sites"/>
</dbReference>
<dbReference type="iPTMnet" id="A6NE02"/>
<dbReference type="PhosphoSitePlus" id="A6NE02"/>
<dbReference type="BioMuta" id="BTBD17"/>
<dbReference type="MassIVE" id="A6NE02"/>
<dbReference type="PaxDb" id="9606-ENSP00000364515"/>
<dbReference type="PeptideAtlas" id="A6NE02"/>
<dbReference type="ProteomicsDB" id="952"/>
<dbReference type="Antibodypedia" id="19431">
    <property type="antibodies" value="78 antibodies from 16 providers"/>
</dbReference>
<dbReference type="DNASU" id="388419"/>
<dbReference type="Ensembl" id="ENST00000375366.4">
    <property type="protein sequence ID" value="ENSP00000364515.3"/>
    <property type="gene ID" value="ENSG00000204347.4"/>
</dbReference>
<dbReference type="GeneID" id="388419"/>
<dbReference type="KEGG" id="hsa:388419"/>
<dbReference type="MANE-Select" id="ENST00000375366.4">
    <property type="protein sequence ID" value="ENSP00000364515.3"/>
    <property type="RefSeq nucleotide sequence ID" value="NM_001080466.2"/>
    <property type="RefSeq protein sequence ID" value="NP_001073935.1"/>
</dbReference>
<dbReference type="UCSC" id="uc002jkn.3">
    <property type="organism name" value="human"/>
</dbReference>
<dbReference type="AGR" id="HGNC:33758"/>
<dbReference type="CTD" id="388419"/>
<dbReference type="DisGeNET" id="388419"/>
<dbReference type="GeneCards" id="BTBD17"/>
<dbReference type="HGNC" id="HGNC:33758">
    <property type="gene designation" value="BTBD17"/>
</dbReference>
<dbReference type="HPA" id="ENSG00000204347">
    <property type="expression patterns" value="Tissue enriched (brain)"/>
</dbReference>
<dbReference type="neXtProt" id="NX_A6NE02"/>
<dbReference type="OpenTargets" id="ENSG00000204347"/>
<dbReference type="PharmGKB" id="PA162377627"/>
<dbReference type="VEuPathDB" id="HostDB:ENSG00000204347"/>
<dbReference type="eggNOG" id="KOG2075">
    <property type="taxonomic scope" value="Eukaryota"/>
</dbReference>
<dbReference type="GeneTree" id="ENSGT00950000182983"/>
<dbReference type="HOGENOM" id="CLU_044480_0_0_1"/>
<dbReference type="InParanoid" id="A6NE02"/>
<dbReference type="OMA" id="TVLNHSM"/>
<dbReference type="OrthoDB" id="2359033at2759"/>
<dbReference type="PAN-GO" id="A6NE02">
    <property type="GO annotations" value="0 GO annotations based on evolutionary models"/>
</dbReference>
<dbReference type="PhylomeDB" id="A6NE02"/>
<dbReference type="TreeFam" id="TF331368"/>
<dbReference type="PathwayCommons" id="A6NE02"/>
<dbReference type="SignaLink" id="A6NE02"/>
<dbReference type="BioGRID-ORCS" id="388419">
    <property type="hits" value="14 hits in 1174 CRISPR screens"/>
</dbReference>
<dbReference type="CD-CODE" id="FB4E32DD">
    <property type="entry name" value="Presynaptic clusters and postsynaptic densities"/>
</dbReference>
<dbReference type="ChiTaRS" id="BTBD17">
    <property type="organism name" value="human"/>
</dbReference>
<dbReference type="GenomeRNAi" id="388419"/>
<dbReference type="Pharos" id="A6NE02">
    <property type="development level" value="Tdark"/>
</dbReference>
<dbReference type="PRO" id="PR:A6NE02"/>
<dbReference type="Proteomes" id="UP000005640">
    <property type="component" value="Chromosome 17"/>
</dbReference>
<dbReference type="RNAct" id="A6NE02">
    <property type="molecule type" value="protein"/>
</dbReference>
<dbReference type="Bgee" id="ENSG00000204347">
    <property type="expression patterns" value="Expressed in primordial germ cell in gonad and 42 other cell types or tissues"/>
</dbReference>
<dbReference type="GO" id="GO:0005576">
    <property type="term" value="C:extracellular region"/>
    <property type="evidence" value="ECO:0007669"/>
    <property type="project" value="UniProtKB-SubCell"/>
</dbReference>
<dbReference type="GO" id="GO:0005886">
    <property type="term" value="C:plasma membrane"/>
    <property type="evidence" value="ECO:0000250"/>
    <property type="project" value="UniProtKB"/>
</dbReference>
<dbReference type="GO" id="GO:0045071">
    <property type="term" value="P:negative regulation of viral genome replication"/>
    <property type="evidence" value="ECO:0000250"/>
    <property type="project" value="UniProtKB"/>
</dbReference>
<dbReference type="GO" id="GO:0009615">
    <property type="term" value="P:response to virus"/>
    <property type="evidence" value="ECO:0000250"/>
    <property type="project" value="UniProtKB"/>
</dbReference>
<dbReference type="CDD" id="cd18493">
    <property type="entry name" value="BACK_BTBD17"/>
    <property type="match status" value="1"/>
</dbReference>
<dbReference type="CDD" id="cd18292">
    <property type="entry name" value="BTB_POZ_BTBD17"/>
    <property type="match status" value="1"/>
</dbReference>
<dbReference type="FunFam" id="1.25.40.420:FF:000021">
    <property type="entry name" value="BTB/POZ domain-containing protein 17"/>
    <property type="match status" value="1"/>
</dbReference>
<dbReference type="Gene3D" id="1.25.40.420">
    <property type="match status" value="1"/>
</dbReference>
<dbReference type="Gene3D" id="3.30.710.10">
    <property type="entry name" value="Potassium Channel Kv1.1, Chain A"/>
    <property type="match status" value="1"/>
</dbReference>
<dbReference type="InterPro" id="IPR011705">
    <property type="entry name" value="BACK"/>
</dbReference>
<dbReference type="InterPro" id="IPR051481">
    <property type="entry name" value="BTB-POZ/Galectin-3-binding"/>
</dbReference>
<dbReference type="InterPro" id="IPR000210">
    <property type="entry name" value="BTB/POZ_dom"/>
</dbReference>
<dbReference type="InterPro" id="IPR011333">
    <property type="entry name" value="SKP1/BTB/POZ_sf"/>
</dbReference>
<dbReference type="InterPro" id="IPR056184">
    <property type="entry name" value="TRAF_BTBD17"/>
</dbReference>
<dbReference type="PANTHER" id="PTHR24410:SF12">
    <property type="entry name" value="BTB_POZ DOMAIN-CONTAINING PROTEIN 17"/>
    <property type="match status" value="1"/>
</dbReference>
<dbReference type="PANTHER" id="PTHR24410">
    <property type="entry name" value="HL07962P-RELATED"/>
    <property type="match status" value="1"/>
</dbReference>
<dbReference type="Pfam" id="PF07707">
    <property type="entry name" value="BACK"/>
    <property type="match status" value="1"/>
</dbReference>
<dbReference type="Pfam" id="PF00651">
    <property type="entry name" value="BTB"/>
    <property type="match status" value="1"/>
</dbReference>
<dbReference type="Pfam" id="PF23651">
    <property type="entry name" value="TRAF_BTBD17"/>
    <property type="match status" value="1"/>
</dbReference>
<dbReference type="SMART" id="SM00875">
    <property type="entry name" value="BACK"/>
    <property type="match status" value="1"/>
</dbReference>
<dbReference type="SMART" id="SM00225">
    <property type="entry name" value="BTB"/>
    <property type="match status" value="1"/>
</dbReference>
<dbReference type="SUPFAM" id="SSF54695">
    <property type="entry name" value="POZ domain"/>
    <property type="match status" value="1"/>
</dbReference>
<dbReference type="PROSITE" id="PS50097">
    <property type="entry name" value="BTB"/>
    <property type="match status" value="1"/>
</dbReference>
<gene>
    <name type="primary">BTBD17</name>
</gene>
<accession>A6NE02</accession>
<sequence length="478" mass="52471">MPRRGYSKPGSWGSFWAMLTLVGLVTHAAQRADVGGEAAGTSINHSQAVLQRLQELLRQGNASDVVLRVQAAGTDEVRVFHAHRLLLGLHSELFLELLSNQSEAVLQEPQDCAAVFDKFIRYLYCGELTVLLTQAIPLHRLATKYGVSSLQRGVADYMRAHLAGGAGPAVGWYHYAVGTGDEALRESCLQFLAWNLSAVAASTEWGAVSPELLWQLLQRSDLVLQDELELFHALEAWLGRARPPPAVAERALRAIRYPMIPPAQLFQLQARSAALARHGPAVADLLLQAYQFHAASPLHYAKFFDVNGSAFLPRNYLAPAWGAPWVINNPARDDRSTSFQTQLGPSGHDAGRRVTWNVLFSPRWLPVSLRPVYADAAGTALPAARPEDGRPRLVVTPASSGGDAAGVSFQKTVLVGARQQGRLLVRHAYSFHQSSEEAGDFLAHADLQRRNSEYLVENALHLHLIVKPVYHTLIRTPK</sequence>
<comment type="subcellular location">
    <subcellularLocation>
        <location evidence="3">Secreted</location>
    </subcellularLocation>
</comment>
<feature type="signal peptide" evidence="1">
    <location>
        <begin position="1"/>
        <end position="28"/>
    </location>
</feature>
<feature type="chain" id="PRO_0000340704" description="BTB/POZ domain-containing protein 17">
    <location>
        <begin position="29"/>
        <end position="478"/>
    </location>
</feature>
<feature type="domain" description="BTB" evidence="2">
    <location>
        <begin position="63"/>
        <end position="132"/>
    </location>
</feature>
<feature type="domain" description="BACK">
    <location>
        <begin position="169"/>
        <end position="269"/>
    </location>
</feature>
<feature type="glycosylation site" description="N-linked (GlcNAc...) asparagine" evidence="1">
    <location>
        <position position="61"/>
    </location>
</feature>
<feature type="glycosylation site" description="N-linked (GlcNAc...) asparagine" evidence="1">
    <location>
        <position position="100"/>
    </location>
</feature>
<feature type="glycosylation site" description="N-linked (GlcNAc...) asparagine" evidence="1">
    <location>
        <position position="195"/>
    </location>
</feature>